<name>BLO9_KLEAE</name>
<keyword id="KW-0046">Antibiotic resistance</keyword>
<keyword id="KW-0378">Hydrolase</keyword>
<keyword id="KW-0614">Plasmid</keyword>
<keyword id="KW-0732">Signal</keyword>
<keyword id="KW-0814">Transposable element</keyword>
<accession>P0A3M4</accession>
<accession>P22070</accession>
<sequence length="274" mass="30568">MKKILLLHMLVFVSATLPISSVASDEVETLKCTIIADAITGNTLYETGECARRVSPCSSFKLPLAIMGFDSGILQSPKSPTWELKPEYNPSPRDRTYKQVYPALWQSDSVVWFSQQLTSRLGVDRFTEYVKKFEYGNQDVSGDSGKHNGLTQSWLMSSLTISPKEQIQFLLRFVAHKLPVSEAAYDMAYATIPQYQAAEGWAVHGKSGSGWLRDNNGKINESRPQGWFVGWAEKNGRQVVFARLEIGKEKSDIPGGSKAREDILVELPVLMGNK</sequence>
<comment type="function">
    <text>Oxacillin-hydrolyzing beta-lactamase. Confers resistance to beta-lactam antibiotics but at a significantly lower level than the TEM bla gene product.</text>
</comment>
<comment type="catalytic activity">
    <reaction evidence="3">
        <text>a beta-lactam + H2O = a substituted beta-amino acid</text>
        <dbReference type="Rhea" id="RHEA:20401"/>
        <dbReference type="ChEBI" id="CHEBI:15377"/>
        <dbReference type="ChEBI" id="CHEBI:35627"/>
        <dbReference type="ChEBI" id="CHEBI:140347"/>
        <dbReference type="EC" id="3.5.2.6"/>
    </reaction>
</comment>
<comment type="similarity">
    <text evidence="4">Belongs to the class-D beta-lactamase family.</text>
</comment>
<comment type="sequence caution" evidence="4">
    <conflict type="erroneous initiation">
        <sequence resource="EMBL-CDS" id="AAD22145"/>
    </conflict>
</comment>
<feature type="signal peptide" evidence="2">
    <location>
        <begin position="1"/>
        <end position="24"/>
    </location>
</feature>
<feature type="chain" id="PRO_0000017035" description="Beta-lactamase OXA-9">
    <location>
        <begin position="25"/>
        <end position="274"/>
    </location>
</feature>
<feature type="active site" description="Acyl-ester intermediate" evidence="3">
    <location>
        <position position="58"/>
    </location>
</feature>
<feature type="binding site" evidence="1">
    <location>
        <begin position="206"/>
        <end position="208"/>
    </location>
    <ligand>
        <name>substrate</name>
    </ligand>
</feature>
<feature type="modified residue" description="N6-carboxylysine" evidence="1">
    <location>
        <position position="61"/>
    </location>
</feature>
<proteinExistence type="inferred from homology"/>
<protein>
    <recommendedName>
        <fullName>Beta-lactamase OXA-9</fullName>
        <ecNumber>3.5.2.6</ecNumber>
    </recommendedName>
    <alternativeName>
        <fullName>Oxacillinase</fullName>
    </alternativeName>
    <alternativeName>
        <fullName>Penicillinase</fullName>
    </alternativeName>
</protein>
<reference key="1">
    <citation type="journal article" date="1998" name="Antimicrob. Agents Chemother.">
        <title>Characterization of In40 of Enterobacter aerogenes BM2688, a class 1 integron with two new gene cassettes, cmlA2 and qacF.</title>
        <authorList>
            <person name="Ploy M.-C."/>
            <person name="Courvalin P."/>
            <person name="Lambert T."/>
        </authorList>
    </citation>
    <scope>NUCLEOTIDE SEQUENCE [GENOMIC DNA]</scope>
    <source>
        <strain>BM2688-1</strain>
        <transposon>In40</transposon>
    </source>
</reference>
<geneLocation type="plasmid">
    <name>pIP833</name>
</geneLocation>
<evidence type="ECO:0000250" key="1"/>
<evidence type="ECO:0000255" key="2"/>
<evidence type="ECO:0000255" key="3">
    <source>
        <dbReference type="PROSITE-ProRule" id="PRU10103"/>
    </source>
</evidence>
<evidence type="ECO:0000305" key="4"/>
<organism>
    <name type="scientific">Klebsiella aerogenes</name>
    <name type="common">Enterobacter aerogenes</name>
    <dbReference type="NCBI Taxonomy" id="548"/>
    <lineage>
        <taxon>Bacteria</taxon>
        <taxon>Pseudomonadati</taxon>
        <taxon>Pseudomonadota</taxon>
        <taxon>Gammaproteobacteria</taxon>
        <taxon>Enterobacterales</taxon>
        <taxon>Enterobacteriaceae</taxon>
        <taxon>Klebsiella/Raoultella group</taxon>
        <taxon>Klebsiella</taxon>
    </lineage>
</organism>
<gene>
    <name type="primary">bla</name>
    <name type="synonym">oxa9</name>
</gene>
<dbReference type="EC" id="3.5.2.6"/>
<dbReference type="EMBL" id="AF034958">
    <property type="protein sequence ID" value="AAD22145.1"/>
    <property type="status" value="ALT_INIT"/>
    <property type="molecule type" value="Genomic_DNA"/>
</dbReference>
<dbReference type="SMR" id="P0A3M4"/>
<dbReference type="ChEMBL" id="CHEMBL1744486"/>
<dbReference type="PATRIC" id="fig|548.60.peg.3688"/>
<dbReference type="SABIO-RK" id="P0A3M4"/>
<dbReference type="GO" id="GO:0008800">
    <property type="term" value="F:beta-lactamase activity"/>
    <property type="evidence" value="ECO:0007669"/>
    <property type="project" value="UniProtKB-EC"/>
</dbReference>
<dbReference type="GO" id="GO:0008658">
    <property type="term" value="F:penicillin binding"/>
    <property type="evidence" value="ECO:0007669"/>
    <property type="project" value="InterPro"/>
</dbReference>
<dbReference type="GO" id="GO:0017001">
    <property type="term" value="P:antibiotic catabolic process"/>
    <property type="evidence" value="ECO:0007669"/>
    <property type="project" value="InterPro"/>
</dbReference>
<dbReference type="GO" id="GO:0046677">
    <property type="term" value="P:response to antibiotic"/>
    <property type="evidence" value="ECO:0007669"/>
    <property type="project" value="UniProtKB-KW"/>
</dbReference>
<dbReference type="Gene3D" id="3.40.710.10">
    <property type="entry name" value="DD-peptidase/beta-lactamase superfamily"/>
    <property type="match status" value="1"/>
</dbReference>
<dbReference type="InterPro" id="IPR012338">
    <property type="entry name" value="Beta-lactam/transpept-like"/>
</dbReference>
<dbReference type="InterPro" id="IPR002137">
    <property type="entry name" value="Beta-lactam_class-D_AS"/>
</dbReference>
<dbReference type="InterPro" id="IPR001460">
    <property type="entry name" value="PCN-bd_Tpept"/>
</dbReference>
<dbReference type="NCBIfam" id="NF000270">
    <property type="entry name" value="bla_class_D_alt"/>
    <property type="match status" value="1"/>
</dbReference>
<dbReference type="NCBIfam" id="NF040532">
    <property type="entry name" value="blaOXA-9_like"/>
    <property type="match status" value="1"/>
</dbReference>
<dbReference type="Pfam" id="PF00905">
    <property type="entry name" value="Transpeptidase"/>
    <property type="match status" value="1"/>
</dbReference>
<dbReference type="SUPFAM" id="SSF56601">
    <property type="entry name" value="beta-lactamase/transpeptidase-like"/>
    <property type="match status" value="1"/>
</dbReference>
<dbReference type="PROSITE" id="PS00337">
    <property type="entry name" value="BETA_LACTAMASE_D"/>
    <property type="match status" value="1"/>
</dbReference>